<organism>
    <name type="scientific">Drosophila ananassae</name>
    <name type="common">Fruit fly</name>
    <dbReference type="NCBI Taxonomy" id="7217"/>
    <lineage>
        <taxon>Eukaryota</taxon>
        <taxon>Metazoa</taxon>
        <taxon>Ecdysozoa</taxon>
        <taxon>Arthropoda</taxon>
        <taxon>Hexapoda</taxon>
        <taxon>Insecta</taxon>
        <taxon>Pterygota</taxon>
        <taxon>Neoptera</taxon>
        <taxon>Endopterygota</taxon>
        <taxon>Diptera</taxon>
        <taxon>Brachycera</taxon>
        <taxon>Muscomorpha</taxon>
        <taxon>Ephydroidea</taxon>
        <taxon>Drosophilidae</taxon>
        <taxon>Drosophila</taxon>
        <taxon>Sophophora</taxon>
    </lineage>
</organism>
<keyword id="KW-0131">Cell cycle</keyword>
<keyword id="KW-0132">Cell division</keyword>
<keyword id="KW-0175">Coiled coil</keyword>
<keyword id="KW-0963">Cytoplasm</keyword>
<keyword id="KW-0206">Cytoskeleton</keyword>
<keyword id="KW-0493">Microtubule</keyword>
<keyword id="KW-0498">Mitosis</keyword>
<keyword id="KW-1185">Reference proteome</keyword>
<keyword id="KW-0677">Repeat</keyword>
<keyword id="KW-0813">Transport</keyword>
<keyword id="KW-0853">WD repeat</keyword>
<reference key="1">
    <citation type="journal article" date="2007" name="Nature">
        <title>Evolution of genes and genomes on the Drosophila phylogeny.</title>
        <authorList>
            <consortium name="Drosophila 12 genomes consortium"/>
        </authorList>
    </citation>
    <scope>NUCLEOTIDE SEQUENCE [LARGE SCALE GENOMIC DNA]</scope>
    <source>
        <strain>Tucson 14024-0371.13</strain>
    </source>
</reference>
<sequence length="411" mass="46446">MKMVLSQRQREELNQAIADYLGSNGYADSLEAFRKEADLSTEAEKKFGGLLEKKWTSVIRLQKKVMELEAKLTEAEKEVIEGAPTKNKRTPGEWIPRPPEKYSMSGHRASITRVIFHPIFGLVVSASEDATIKIWDFETGEYERSLKGHTDSVQDVAFDAQGKLLASCSADLSIKLWDFQQTYECVKTMHGHDHNVSSVAFVPAGDYVLSASRDRTVKMWEVATGYCVKTYTGHREWVRMVRVHIEGSIFATCSNDHTIRVWLTNSRDCKVELRDHEHTVECIAWAPEAAASAINEAAGADNKKGHHQGPFLASGSRDKTIRIWDVSVGLCLFTLNGHDNWVRGLAFHPAGKYLVSASDDKTIRVWDLRNKRCMKTLYAHQHFCTSIDFHKAHPYVISGSVDQTVKVWECR</sequence>
<feature type="chain" id="PRO_0000405040" description="Lissencephaly-1 homolog">
    <location>
        <begin position="1"/>
        <end position="411"/>
    </location>
</feature>
<feature type="domain" description="LisH" evidence="1">
    <location>
        <begin position="9"/>
        <end position="41"/>
    </location>
</feature>
<feature type="repeat" description="WD 1">
    <location>
        <begin position="106"/>
        <end position="147"/>
    </location>
</feature>
<feature type="repeat" description="WD 2">
    <location>
        <begin position="148"/>
        <end position="187"/>
    </location>
</feature>
<feature type="repeat" description="WD 3">
    <location>
        <begin position="191"/>
        <end position="230"/>
    </location>
</feature>
<feature type="repeat" description="WD 4">
    <location>
        <begin position="233"/>
        <end position="272"/>
    </location>
</feature>
<feature type="repeat" description="WD 5">
    <location>
        <begin position="275"/>
        <end position="334"/>
    </location>
</feature>
<feature type="repeat" description="WD 6">
    <location>
        <begin position="337"/>
        <end position="376"/>
    </location>
</feature>
<feature type="repeat" description="WD 7">
    <location>
        <begin position="379"/>
        <end position="411"/>
    </location>
</feature>
<feature type="coiled-coil region" evidence="1">
    <location>
        <begin position="56"/>
        <end position="83"/>
    </location>
</feature>
<name>LIS1_DROAN</name>
<protein>
    <recommendedName>
        <fullName evidence="1">Lissencephaly-1 homolog</fullName>
    </recommendedName>
</protein>
<accession>B3MEY6</accession>
<dbReference type="EMBL" id="CH902619">
    <property type="protein sequence ID" value="EDV36607.1"/>
    <property type="molecule type" value="Genomic_DNA"/>
</dbReference>
<dbReference type="SMR" id="B3MEY6"/>
<dbReference type="FunCoup" id="B3MEY6">
    <property type="interactions" value="2010"/>
</dbReference>
<dbReference type="STRING" id="7217.B3MEY6"/>
<dbReference type="EnsemblMetazoa" id="FBtr0116564">
    <property type="protein sequence ID" value="FBpp0115056"/>
    <property type="gene ID" value="FBgn0088904"/>
</dbReference>
<dbReference type="EnsemblMetazoa" id="XM_001959749.4">
    <property type="protein sequence ID" value="XP_001959785.1"/>
    <property type="gene ID" value="LOC6494726"/>
</dbReference>
<dbReference type="EnsemblMetazoa" id="XM_044715208.1">
    <property type="protein sequence ID" value="XP_044571143.1"/>
    <property type="gene ID" value="LOC6494726"/>
</dbReference>
<dbReference type="GeneID" id="6494726"/>
<dbReference type="KEGG" id="dan:6494726"/>
<dbReference type="CTD" id="36791"/>
<dbReference type="eggNOG" id="KOG0295">
    <property type="taxonomic scope" value="Eukaryota"/>
</dbReference>
<dbReference type="HOGENOM" id="CLU_000288_57_15_1"/>
<dbReference type="InParanoid" id="B3MEY6"/>
<dbReference type="OMA" id="WHVATKE"/>
<dbReference type="OrthoDB" id="674604at2759"/>
<dbReference type="PhylomeDB" id="B3MEY6"/>
<dbReference type="Proteomes" id="UP000007801">
    <property type="component" value="Unassembled WGS sequence"/>
</dbReference>
<dbReference type="GO" id="GO:1904115">
    <property type="term" value="C:axon cytoplasm"/>
    <property type="evidence" value="ECO:0007669"/>
    <property type="project" value="GOC"/>
</dbReference>
<dbReference type="GO" id="GO:0005938">
    <property type="term" value="C:cell cortex"/>
    <property type="evidence" value="ECO:0007669"/>
    <property type="project" value="EnsemblMetazoa"/>
</dbReference>
<dbReference type="GO" id="GO:0030425">
    <property type="term" value="C:dendrite"/>
    <property type="evidence" value="ECO:0007669"/>
    <property type="project" value="EnsemblMetazoa"/>
</dbReference>
<dbReference type="GO" id="GO:0005869">
    <property type="term" value="C:dynactin complex"/>
    <property type="evidence" value="ECO:0007669"/>
    <property type="project" value="EnsemblMetazoa"/>
</dbReference>
<dbReference type="GO" id="GO:0030286">
    <property type="term" value="C:dynein complex"/>
    <property type="evidence" value="ECO:0007669"/>
    <property type="project" value="EnsemblMetazoa"/>
</dbReference>
<dbReference type="GO" id="GO:0030426">
    <property type="term" value="C:growth cone"/>
    <property type="evidence" value="ECO:0007669"/>
    <property type="project" value="EnsemblMetazoa"/>
</dbReference>
<dbReference type="GO" id="GO:0000776">
    <property type="term" value="C:kinetochore"/>
    <property type="evidence" value="ECO:0007669"/>
    <property type="project" value="EnsemblMetazoa"/>
</dbReference>
<dbReference type="GO" id="GO:0005828">
    <property type="term" value="C:kinetochore microtubule"/>
    <property type="evidence" value="ECO:0007669"/>
    <property type="project" value="EnsemblMetazoa"/>
</dbReference>
<dbReference type="GO" id="GO:0043025">
    <property type="term" value="C:neuronal cell body"/>
    <property type="evidence" value="ECO:0007669"/>
    <property type="project" value="EnsemblMetazoa"/>
</dbReference>
<dbReference type="GO" id="GO:0031616">
    <property type="term" value="C:spindle pole centrosome"/>
    <property type="evidence" value="ECO:0007669"/>
    <property type="project" value="EnsemblMetazoa"/>
</dbReference>
<dbReference type="GO" id="GO:0070840">
    <property type="term" value="F:dynein complex binding"/>
    <property type="evidence" value="ECO:0007669"/>
    <property type="project" value="UniProtKB-UniRule"/>
</dbReference>
<dbReference type="GO" id="GO:0007298">
    <property type="term" value="P:border follicle cell migration"/>
    <property type="evidence" value="ECO:0007669"/>
    <property type="project" value="EnsemblMetazoa"/>
</dbReference>
<dbReference type="GO" id="GO:0051642">
    <property type="term" value="P:centrosome localization"/>
    <property type="evidence" value="ECO:0007669"/>
    <property type="project" value="EnsemblMetazoa"/>
</dbReference>
<dbReference type="GO" id="GO:0051299">
    <property type="term" value="P:centrosome separation"/>
    <property type="evidence" value="ECO:0007669"/>
    <property type="project" value="EnsemblMetazoa"/>
</dbReference>
<dbReference type="GO" id="GO:0030381">
    <property type="term" value="P:chorion-containing eggshell pattern formation"/>
    <property type="evidence" value="ECO:0007669"/>
    <property type="project" value="EnsemblMetazoa"/>
</dbReference>
<dbReference type="GO" id="GO:0061883">
    <property type="term" value="P:clathrin-dependent endocytosis involved in vitellogenesis"/>
    <property type="evidence" value="ECO:0007669"/>
    <property type="project" value="EnsemblMetazoa"/>
</dbReference>
<dbReference type="GO" id="GO:0048813">
    <property type="term" value="P:dendrite morphogenesis"/>
    <property type="evidence" value="ECO:0007669"/>
    <property type="project" value="EnsemblMetazoa"/>
</dbReference>
<dbReference type="GO" id="GO:0000132">
    <property type="term" value="P:establishment of mitotic spindle orientation"/>
    <property type="evidence" value="ECO:0007669"/>
    <property type="project" value="UniProtKB-UniRule"/>
</dbReference>
<dbReference type="GO" id="GO:0048142">
    <property type="term" value="P:germarium-derived cystoblast division"/>
    <property type="evidence" value="ECO:0007669"/>
    <property type="project" value="EnsemblMetazoa"/>
</dbReference>
<dbReference type="GO" id="GO:0007294">
    <property type="term" value="P:germarium-derived oocyte fate determination"/>
    <property type="evidence" value="ECO:0007669"/>
    <property type="project" value="EnsemblMetazoa"/>
</dbReference>
<dbReference type="GO" id="GO:0008298">
    <property type="term" value="P:intracellular mRNA localization"/>
    <property type="evidence" value="ECO:0007669"/>
    <property type="project" value="EnsemblMetazoa"/>
</dbReference>
<dbReference type="GO" id="GO:0006886">
    <property type="term" value="P:intracellular protein transport"/>
    <property type="evidence" value="ECO:0007669"/>
    <property type="project" value="EnsemblMetazoa"/>
</dbReference>
<dbReference type="GO" id="GO:0051383">
    <property type="term" value="P:kinetochore organization"/>
    <property type="evidence" value="ECO:0007669"/>
    <property type="project" value="EnsemblMetazoa"/>
</dbReference>
<dbReference type="GO" id="GO:0051012">
    <property type="term" value="P:microtubule sliding"/>
    <property type="evidence" value="ECO:0007669"/>
    <property type="project" value="UniProtKB-UniRule"/>
</dbReference>
<dbReference type="GO" id="GO:0046716">
    <property type="term" value="P:muscle cell cellular homeostasis"/>
    <property type="evidence" value="ECO:0007669"/>
    <property type="project" value="EnsemblMetazoa"/>
</dbReference>
<dbReference type="GO" id="GO:0016319">
    <property type="term" value="P:mushroom body development"/>
    <property type="evidence" value="ECO:0007669"/>
    <property type="project" value="EnsemblMetazoa"/>
</dbReference>
<dbReference type="GO" id="GO:0007405">
    <property type="term" value="P:neuroblast proliferation"/>
    <property type="evidence" value="ECO:0007669"/>
    <property type="project" value="EnsemblMetazoa"/>
</dbReference>
<dbReference type="GO" id="GO:0030473">
    <property type="term" value="P:nuclear migration along microtubule"/>
    <property type="evidence" value="ECO:0007669"/>
    <property type="project" value="EnsemblMetazoa"/>
</dbReference>
<dbReference type="GO" id="GO:0007312">
    <property type="term" value="P:oocyte nucleus migration involved in oocyte dorsal/ventral axis specification"/>
    <property type="evidence" value="ECO:0007669"/>
    <property type="project" value="EnsemblMetazoa"/>
</dbReference>
<dbReference type="GO" id="GO:0030723">
    <property type="term" value="P:ovarian fusome organization"/>
    <property type="evidence" value="ECO:0007669"/>
    <property type="project" value="EnsemblMetazoa"/>
</dbReference>
<dbReference type="GO" id="GO:0007300">
    <property type="term" value="P:ovarian nurse cell to oocyte transport"/>
    <property type="evidence" value="ECO:0007669"/>
    <property type="project" value="EnsemblMetazoa"/>
</dbReference>
<dbReference type="GO" id="GO:0072499">
    <property type="term" value="P:photoreceptor cell axon guidance"/>
    <property type="evidence" value="ECO:0007669"/>
    <property type="project" value="EnsemblMetazoa"/>
</dbReference>
<dbReference type="GO" id="GO:0050772">
    <property type="term" value="P:positive regulation of axonogenesis"/>
    <property type="evidence" value="ECO:0007669"/>
    <property type="project" value="EnsemblMetazoa"/>
</dbReference>
<dbReference type="GO" id="GO:0030513">
    <property type="term" value="P:positive regulation of BMP signaling pathway"/>
    <property type="evidence" value="ECO:0007669"/>
    <property type="project" value="EnsemblMetazoa"/>
</dbReference>
<dbReference type="GO" id="GO:0045842">
    <property type="term" value="P:positive regulation of mitotic metaphase/anaphase transition"/>
    <property type="evidence" value="ECO:0007669"/>
    <property type="project" value="EnsemblMetazoa"/>
</dbReference>
<dbReference type="GO" id="GO:0034501">
    <property type="term" value="P:protein localization to kinetochore"/>
    <property type="evidence" value="ECO:0007669"/>
    <property type="project" value="EnsemblMetazoa"/>
</dbReference>
<dbReference type="GO" id="GO:0048814">
    <property type="term" value="P:regulation of dendrite morphogenesis"/>
    <property type="evidence" value="ECO:0007669"/>
    <property type="project" value="EnsemblMetazoa"/>
</dbReference>
<dbReference type="GO" id="GO:0008090">
    <property type="term" value="P:retrograde axonal transport"/>
    <property type="evidence" value="ECO:0007669"/>
    <property type="project" value="EnsemblMetazoa"/>
</dbReference>
<dbReference type="GO" id="GO:0042052">
    <property type="term" value="P:rhabdomere development"/>
    <property type="evidence" value="ECO:0007669"/>
    <property type="project" value="EnsemblMetazoa"/>
</dbReference>
<dbReference type="GO" id="GO:0007283">
    <property type="term" value="P:spermatogenesis"/>
    <property type="evidence" value="ECO:0007669"/>
    <property type="project" value="EnsemblMetazoa"/>
</dbReference>
<dbReference type="GO" id="GO:0051225">
    <property type="term" value="P:spindle assembly"/>
    <property type="evidence" value="ECO:0007669"/>
    <property type="project" value="EnsemblMetazoa"/>
</dbReference>
<dbReference type="GO" id="GO:0019827">
    <property type="term" value="P:stem cell population maintenance"/>
    <property type="evidence" value="ECO:0007669"/>
    <property type="project" value="EnsemblMetazoa"/>
</dbReference>
<dbReference type="CDD" id="cd00200">
    <property type="entry name" value="WD40"/>
    <property type="match status" value="1"/>
</dbReference>
<dbReference type="FunFam" id="2.130.10.10:FF:000038">
    <property type="entry name" value="Lissencephaly-1 homolog B"/>
    <property type="match status" value="1"/>
</dbReference>
<dbReference type="FunFam" id="1.20.960.30:FF:000002">
    <property type="entry name" value="Platelet-activating factor acetylhydrolase ib"/>
    <property type="match status" value="1"/>
</dbReference>
<dbReference type="Gene3D" id="1.20.960.30">
    <property type="match status" value="1"/>
</dbReference>
<dbReference type="Gene3D" id="2.130.10.10">
    <property type="entry name" value="YVTN repeat-like/Quinoprotein amine dehydrogenase"/>
    <property type="match status" value="1"/>
</dbReference>
<dbReference type="HAMAP" id="MF_03141">
    <property type="entry name" value="lis1"/>
    <property type="match status" value="1"/>
</dbReference>
<dbReference type="InterPro" id="IPR017252">
    <property type="entry name" value="Dynein_regulator_LIS1"/>
</dbReference>
<dbReference type="InterPro" id="IPR020472">
    <property type="entry name" value="G-protein_beta_WD-40_rep"/>
</dbReference>
<dbReference type="InterPro" id="IPR037190">
    <property type="entry name" value="LIS1_N"/>
</dbReference>
<dbReference type="InterPro" id="IPR006594">
    <property type="entry name" value="LisH"/>
</dbReference>
<dbReference type="InterPro" id="IPR056795">
    <property type="entry name" value="PAC1-like_LisH-like_dom"/>
</dbReference>
<dbReference type="InterPro" id="IPR015943">
    <property type="entry name" value="WD40/YVTN_repeat-like_dom_sf"/>
</dbReference>
<dbReference type="InterPro" id="IPR019775">
    <property type="entry name" value="WD40_repeat_CS"/>
</dbReference>
<dbReference type="InterPro" id="IPR036322">
    <property type="entry name" value="WD40_repeat_dom_sf"/>
</dbReference>
<dbReference type="InterPro" id="IPR001680">
    <property type="entry name" value="WD40_rpt"/>
</dbReference>
<dbReference type="InterPro" id="IPR050349">
    <property type="entry name" value="WD_LIS1/nudF_dynein_reg"/>
</dbReference>
<dbReference type="PANTHER" id="PTHR44129">
    <property type="entry name" value="WD REPEAT-CONTAINING PROTEIN POP1"/>
    <property type="match status" value="1"/>
</dbReference>
<dbReference type="Pfam" id="PF24951">
    <property type="entry name" value="LisH_PAC1"/>
    <property type="match status" value="1"/>
</dbReference>
<dbReference type="Pfam" id="PF00400">
    <property type="entry name" value="WD40"/>
    <property type="match status" value="7"/>
</dbReference>
<dbReference type="PIRSF" id="PIRSF037647">
    <property type="entry name" value="Dynein_regulator_Lis1"/>
    <property type="match status" value="1"/>
</dbReference>
<dbReference type="PRINTS" id="PR00320">
    <property type="entry name" value="GPROTEINBRPT"/>
</dbReference>
<dbReference type="SMART" id="SM00667">
    <property type="entry name" value="LisH"/>
    <property type="match status" value="1"/>
</dbReference>
<dbReference type="SMART" id="SM00320">
    <property type="entry name" value="WD40"/>
    <property type="match status" value="7"/>
</dbReference>
<dbReference type="SUPFAM" id="SSF109925">
    <property type="entry name" value="Lissencephaly-1 protein (Lis-1, PAF-AH alpha) N-terminal domain"/>
    <property type="match status" value="1"/>
</dbReference>
<dbReference type="SUPFAM" id="SSF50978">
    <property type="entry name" value="WD40 repeat-like"/>
    <property type="match status" value="1"/>
</dbReference>
<dbReference type="PROSITE" id="PS50896">
    <property type="entry name" value="LISH"/>
    <property type="match status" value="1"/>
</dbReference>
<dbReference type="PROSITE" id="PS00678">
    <property type="entry name" value="WD_REPEATS_1"/>
    <property type="match status" value="6"/>
</dbReference>
<dbReference type="PROSITE" id="PS50082">
    <property type="entry name" value="WD_REPEATS_2"/>
    <property type="match status" value="7"/>
</dbReference>
<dbReference type="PROSITE" id="PS50294">
    <property type="entry name" value="WD_REPEATS_REGION"/>
    <property type="match status" value="1"/>
</dbReference>
<proteinExistence type="inferred from homology"/>
<comment type="function">
    <text evidence="1">Positively regulates the activity of the minus-end directed microtubule motor protein dynein. May enhance dynein-mediated microtubule sliding by targeting dynein to the microtubule plus end. Required for several dynein- and microtubule-dependent processes.</text>
</comment>
<comment type="subcellular location">
    <subcellularLocation>
        <location evidence="1">Cytoplasm</location>
        <location evidence="1">Cytoskeleton</location>
    </subcellularLocation>
    <subcellularLocation>
        <location evidence="1">Cytoplasm</location>
        <location evidence="1">Cytoskeleton</location>
        <location evidence="1">Microtubule organizing center</location>
        <location evidence="1">Centrosome</location>
    </subcellularLocation>
    <text evidence="1">Localizes to the plus end of microtubules and to the centrosome.</text>
</comment>
<comment type="domain">
    <text evidence="1">Dimerization mediated by the LisH domain may be required to activate dynein.</text>
</comment>
<comment type="similarity">
    <text evidence="1">Belongs to the WD repeat LIS1/nudF family.</text>
</comment>
<gene>
    <name evidence="1" type="primary">Lis-1</name>
    <name type="ORF">GF11864</name>
</gene>
<evidence type="ECO:0000255" key="1">
    <source>
        <dbReference type="HAMAP-Rule" id="MF_03141"/>
    </source>
</evidence>